<name>DNAJ_COXBR</name>
<gene>
    <name evidence="1" type="primary">dnaJ</name>
    <name type="ordered locus">COXBURSA331_A1438</name>
</gene>
<proteinExistence type="inferred from homology"/>
<organism>
    <name type="scientific">Coxiella burnetii (strain RSA 331 / Henzerling II)</name>
    <dbReference type="NCBI Taxonomy" id="360115"/>
    <lineage>
        <taxon>Bacteria</taxon>
        <taxon>Pseudomonadati</taxon>
        <taxon>Pseudomonadota</taxon>
        <taxon>Gammaproteobacteria</taxon>
        <taxon>Legionellales</taxon>
        <taxon>Coxiellaceae</taxon>
        <taxon>Coxiella</taxon>
    </lineage>
</organism>
<protein>
    <recommendedName>
        <fullName evidence="1">Chaperone protein DnaJ</fullName>
    </recommendedName>
</protein>
<reference key="1">
    <citation type="submission" date="2007-11" db="EMBL/GenBank/DDBJ databases">
        <title>Genome sequencing of phylogenetically and phenotypically diverse Coxiella burnetii isolates.</title>
        <authorList>
            <person name="Seshadri R."/>
            <person name="Samuel J.E."/>
        </authorList>
    </citation>
    <scope>NUCLEOTIDE SEQUENCE [LARGE SCALE GENOMIC DNA]</scope>
    <source>
        <strain>RSA 331 / Henzerling II</strain>
    </source>
</reference>
<evidence type="ECO:0000255" key="1">
    <source>
        <dbReference type="HAMAP-Rule" id="MF_01152"/>
    </source>
</evidence>
<feature type="chain" id="PRO_1000085182" description="Chaperone protein DnaJ">
    <location>
        <begin position="1"/>
        <end position="374"/>
    </location>
</feature>
<feature type="domain" description="J" evidence="1">
    <location>
        <begin position="5"/>
        <end position="70"/>
    </location>
</feature>
<feature type="repeat" description="CXXCXGXG motif">
    <location>
        <begin position="146"/>
        <end position="153"/>
    </location>
</feature>
<feature type="repeat" description="CXXCXGXG motif">
    <location>
        <begin position="162"/>
        <end position="169"/>
    </location>
</feature>
<feature type="repeat" description="CXXCXGXG motif">
    <location>
        <begin position="184"/>
        <end position="191"/>
    </location>
</feature>
<feature type="repeat" description="CXXCXGXG motif">
    <location>
        <begin position="198"/>
        <end position="205"/>
    </location>
</feature>
<feature type="zinc finger region" description="CR-type" evidence="1">
    <location>
        <begin position="133"/>
        <end position="210"/>
    </location>
</feature>
<feature type="binding site" evidence="1">
    <location>
        <position position="146"/>
    </location>
    <ligand>
        <name>Zn(2+)</name>
        <dbReference type="ChEBI" id="CHEBI:29105"/>
        <label>1</label>
    </ligand>
</feature>
<feature type="binding site" evidence="1">
    <location>
        <position position="149"/>
    </location>
    <ligand>
        <name>Zn(2+)</name>
        <dbReference type="ChEBI" id="CHEBI:29105"/>
        <label>1</label>
    </ligand>
</feature>
<feature type="binding site" evidence="1">
    <location>
        <position position="162"/>
    </location>
    <ligand>
        <name>Zn(2+)</name>
        <dbReference type="ChEBI" id="CHEBI:29105"/>
        <label>2</label>
    </ligand>
</feature>
<feature type="binding site" evidence="1">
    <location>
        <position position="165"/>
    </location>
    <ligand>
        <name>Zn(2+)</name>
        <dbReference type="ChEBI" id="CHEBI:29105"/>
        <label>2</label>
    </ligand>
</feature>
<feature type="binding site" evidence="1">
    <location>
        <position position="184"/>
    </location>
    <ligand>
        <name>Zn(2+)</name>
        <dbReference type="ChEBI" id="CHEBI:29105"/>
        <label>2</label>
    </ligand>
</feature>
<feature type="binding site" evidence="1">
    <location>
        <position position="187"/>
    </location>
    <ligand>
        <name>Zn(2+)</name>
        <dbReference type="ChEBI" id="CHEBI:29105"/>
        <label>2</label>
    </ligand>
</feature>
<feature type="binding site" evidence="1">
    <location>
        <position position="198"/>
    </location>
    <ligand>
        <name>Zn(2+)</name>
        <dbReference type="ChEBI" id="CHEBI:29105"/>
        <label>1</label>
    </ligand>
</feature>
<feature type="binding site" evidence="1">
    <location>
        <position position="201"/>
    </location>
    <ligand>
        <name>Zn(2+)</name>
        <dbReference type="ChEBI" id="CHEBI:29105"/>
        <label>1</label>
    </ligand>
</feature>
<comment type="function">
    <text evidence="1">Participates actively in the response to hyperosmotic and heat shock by preventing the aggregation of stress-denatured proteins and by disaggregating proteins, also in an autonomous, DnaK-independent fashion. Unfolded proteins bind initially to DnaJ; upon interaction with the DnaJ-bound protein, DnaK hydrolyzes its bound ATP, resulting in the formation of a stable complex. GrpE releases ADP from DnaK; ATP binding to DnaK triggers the release of the substrate protein, thus completing the reaction cycle. Several rounds of ATP-dependent interactions between DnaJ, DnaK and GrpE are required for fully efficient folding. Also involved, together with DnaK and GrpE, in the DNA replication of plasmids through activation of initiation proteins.</text>
</comment>
<comment type="cofactor">
    <cofactor evidence="1">
        <name>Zn(2+)</name>
        <dbReference type="ChEBI" id="CHEBI:29105"/>
    </cofactor>
    <text evidence="1">Binds 2 Zn(2+) ions per monomer.</text>
</comment>
<comment type="subunit">
    <text evidence="1">Homodimer.</text>
</comment>
<comment type="subcellular location">
    <subcellularLocation>
        <location evidence="1">Cytoplasm</location>
    </subcellularLocation>
</comment>
<comment type="domain">
    <text evidence="1">The J domain is necessary and sufficient to stimulate DnaK ATPase activity. Zinc center 1 plays an important role in the autonomous, DnaK-independent chaperone activity of DnaJ. Zinc center 2 is essential for interaction with DnaK and for DnaJ activity.</text>
</comment>
<comment type="similarity">
    <text evidence="1">Belongs to the DnaJ family.</text>
</comment>
<accession>A9N8H1</accession>
<dbReference type="EMBL" id="CP000890">
    <property type="protein sequence ID" value="ABX78747.1"/>
    <property type="molecule type" value="Genomic_DNA"/>
</dbReference>
<dbReference type="RefSeq" id="WP_012220587.1">
    <property type="nucleotide sequence ID" value="NC_010117.1"/>
</dbReference>
<dbReference type="SMR" id="A9N8H1"/>
<dbReference type="KEGG" id="cbs:COXBURSA331_A1438"/>
<dbReference type="HOGENOM" id="CLU_017633_0_7_6"/>
<dbReference type="GO" id="GO:0005737">
    <property type="term" value="C:cytoplasm"/>
    <property type="evidence" value="ECO:0007669"/>
    <property type="project" value="UniProtKB-SubCell"/>
</dbReference>
<dbReference type="GO" id="GO:0005524">
    <property type="term" value="F:ATP binding"/>
    <property type="evidence" value="ECO:0007669"/>
    <property type="project" value="InterPro"/>
</dbReference>
<dbReference type="GO" id="GO:0031072">
    <property type="term" value="F:heat shock protein binding"/>
    <property type="evidence" value="ECO:0007669"/>
    <property type="project" value="InterPro"/>
</dbReference>
<dbReference type="GO" id="GO:0051082">
    <property type="term" value="F:unfolded protein binding"/>
    <property type="evidence" value="ECO:0007669"/>
    <property type="project" value="UniProtKB-UniRule"/>
</dbReference>
<dbReference type="GO" id="GO:0008270">
    <property type="term" value="F:zinc ion binding"/>
    <property type="evidence" value="ECO:0007669"/>
    <property type="project" value="UniProtKB-UniRule"/>
</dbReference>
<dbReference type="GO" id="GO:0051085">
    <property type="term" value="P:chaperone cofactor-dependent protein refolding"/>
    <property type="evidence" value="ECO:0007669"/>
    <property type="project" value="TreeGrafter"/>
</dbReference>
<dbReference type="GO" id="GO:0006260">
    <property type="term" value="P:DNA replication"/>
    <property type="evidence" value="ECO:0007669"/>
    <property type="project" value="UniProtKB-KW"/>
</dbReference>
<dbReference type="GO" id="GO:0042026">
    <property type="term" value="P:protein refolding"/>
    <property type="evidence" value="ECO:0007669"/>
    <property type="project" value="TreeGrafter"/>
</dbReference>
<dbReference type="GO" id="GO:0009408">
    <property type="term" value="P:response to heat"/>
    <property type="evidence" value="ECO:0007669"/>
    <property type="project" value="InterPro"/>
</dbReference>
<dbReference type="CDD" id="cd06257">
    <property type="entry name" value="DnaJ"/>
    <property type="match status" value="1"/>
</dbReference>
<dbReference type="CDD" id="cd10747">
    <property type="entry name" value="DnaJ_C"/>
    <property type="match status" value="1"/>
</dbReference>
<dbReference type="CDD" id="cd10719">
    <property type="entry name" value="DnaJ_zf"/>
    <property type="match status" value="1"/>
</dbReference>
<dbReference type="FunFam" id="1.10.287.110:FF:000160">
    <property type="entry name" value="Chaperone protein DnaJ"/>
    <property type="match status" value="1"/>
</dbReference>
<dbReference type="FunFam" id="2.10.230.10:FF:000002">
    <property type="entry name" value="Molecular chaperone DnaJ"/>
    <property type="match status" value="1"/>
</dbReference>
<dbReference type="FunFam" id="2.60.260.20:FF:000004">
    <property type="entry name" value="Molecular chaperone DnaJ"/>
    <property type="match status" value="1"/>
</dbReference>
<dbReference type="Gene3D" id="1.10.287.110">
    <property type="entry name" value="DnaJ domain"/>
    <property type="match status" value="1"/>
</dbReference>
<dbReference type="Gene3D" id="2.10.230.10">
    <property type="entry name" value="Heat shock protein DnaJ, cysteine-rich domain"/>
    <property type="match status" value="1"/>
</dbReference>
<dbReference type="Gene3D" id="2.60.260.20">
    <property type="entry name" value="Urease metallochaperone UreE, N-terminal domain"/>
    <property type="match status" value="2"/>
</dbReference>
<dbReference type="HAMAP" id="MF_01152">
    <property type="entry name" value="DnaJ"/>
    <property type="match status" value="1"/>
</dbReference>
<dbReference type="InterPro" id="IPR012724">
    <property type="entry name" value="DnaJ"/>
</dbReference>
<dbReference type="InterPro" id="IPR002939">
    <property type="entry name" value="DnaJ_C"/>
</dbReference>
<dbReference type="InterPro" id="IPR001623">
    <property type="entry name" value="DnaJ_domain"/>
</dbReference>
<dbReference type="InterPro" id="IPR018253">
    <property type="entry name" value="DnaJ_domain_CS"/>
</dbReference>
<dbReference type="InterPro" id="IPR008971">
    <property type="entry name" value="HSP40/DnaJ_pept-bd"/>
</dbReference>
<dbReference type="InterPro" id="IPR001305">
    <property type="entry name" value="HSP_DnaJ_Cys-rich_dom"/>
</dbReference>
<dbReference type="InterPro" id="IPR036410">
    <property type="entry name" value="HSP_DnaJ_Cys-rich_dom_sf"/>
</dbReference>
<dbReference type="InterPro" id="IPR036869">
    <property type="entry name" value="J_dom_sf"/>
</dbReference>
<dbReference type="NCBIfam" id="TIGR02349">
    <property type="entry name" value="DnaJ_bact"/>
    <property type="match status" value="1"/>
</dbReference>
<dbReference type="NCBIfam" id="NF008035">
    <property type="entry name" value="PRK10767.1"/>
    <property type="match status" value="1"/>
</dbReference>
<dbReference type="PANTHER" id="PTHR43096:SF48">
    <property type="entry name" value="CHAPERONE PROTEIN DNAJ"/>
    <property type="match status" value="1"/>
</dbReference>
<dbReference type="PANTHER" id="PTHR43096">
    <property type="entry name" value="DNAJ HOMOLOG 1, MITOCHONDRIAL-RELATED"/>
    <property type="match status" value="1"/>
</dbReference>
<dbReference type="Pfam" id="PF00226">
    <property type="entry name" value="DnaJ"/>
    <property type="match status" value="1"/>
</dbReference>
<dbReference type="Pfam" id="PF01556">
    <property type="entry name" value="DnaJ_C"/>
    <property type="match status" value="1"/>
</dbReference>
<dbReference type="Pfam" id="PF00684">
    <property type="entry name" value="DnaJ_CXXCXGXG"/>
    <property type="match status" value="1"/>
</dbReference>
<dbReference type="PRINTS" id="PR00625">
    <property type="entry name" value="JDOMAIN"/>
</dbReference>
<dbReference type="SMART" id="SM00271">
    <property type="entry name" value="DnaJ"/>
    <property type="match status" value="1"/>
</dbReference>
<dbReference type="SUPFAM" id="SSF46565">
    <property type="entry name" value="Chaperone J-domain"/>
    <property type="match status" value="1"/>
</dbReference>
<dbReference type="SUPFAM" id="SSF57938">
    <property type="entry name" value="DnaJ/Hsp40 cysteine-rich domain"/>
    <property type="match status" value="1"/>
</dbReference>
<dbReference type="SUPFAM" id="SSF49493">
    <property type="entry name" value="HSP40/DnaJ peptide-binding domain"/>
    <property type="match status" value="2"/>
</dbReference>
<dbReference type="PROSITE" id="PS00636">
    <property type="entry name" value="DNAJ_1"/>
    <property type="match status" value="1"/>
</dbReference>
<dbReference type="PROSITE" id="PS50076">
    <property type="entry name" value="DNAJ_2"/>
    <property type="match status" value="1"/>
</dbReference>
<dbReference type="PROSITE" id="PS51188">
    <property type="entry name" value="ZF_CR"/>
    <property type="match status" value="1"/>
</dbReference>
<sequence length="374" mass="40886">MAKRDYYEVLGVNLNATEAEVKKAFRRLAMKYHPDRNPGDKDAEVKFKEAREAYEVLCDSRKRASYDQFGHAGVEQTFGGAGAGGFGFGDLGDIFGDIFGDIFSGARGGQAREQRGADLAYELVLSLEEAVHGLSRTIKVPTWINCKTCNGSGAKGSSPATCPRCNGSGQMRMQHGFLQVQQTCSVCRGRGQVIKDPCTDCHGQGRQQQTKTLSVKIPPGIDTGDRIRLAGEGEAGLFGAPPGDLYVQVRVKPHPLFHREGNDLHSEVPIDFTTAALGGEMEIPTLDGSVRLTIPPETQGGKQFRLRGKGVKALRSGAVGDLICHIVVETPVKLSPEQKDYLKQFAELLKKDEKNHSPRTRNWFDSVKDFFTSK</sequence>
<keyword id="KW-0143">Chaperone</keyword>
<keyword id="KW-0963">Cytoplasm</keyword>
<keyword id="KW-0235">DNA replication</keyword>
<keyword id="KW-0479">Metal-binding</keyword>
<keyword id="KW-0677">Repeat</keyword>
<keyword id="KW-0346">Stress response</keyword>
<keyword id="KW-0862">Zinc</keyword>
<keyword id="KW-0863">Zinc-finger</keyword>